<dbReference type="EC" id="6.3.5.9" evidence="1"/>
<dbReference type="EMBL" id="LT708304">
    <property type="protein sequence ID" value="SIU01493.1"/>
    <property type="molecule type" value="Genomic_DNA"/>
</dbReference>
<dbReference type="RefSeq" id="NP_856518.1">
    <property type="nucleotide sequence ID" value="NC_002945.3"/>
</dbReference>
<dbReference type="RefSeq" id="WP_003899509.1">
    <property type="nucleotide sequence ID" value="NC_002945.4"/>
</dbReference>
<dbReference type="SMR" id="P63836"/>
<dbReference type="KEGG" id="mbo:BQ2027_MB2873C"/>
<dbReference type="PATRIC" id="fig|233413.5.peg.3151"/>
<dbReference type="UniPathway" id="UPA00148">
    <property type="reaction ID" value="UER00220"/>
</dbReference>
<dbReference type="Proteomes" id="UP000001419">
    <property type="component" value="Chromosome"/>
</dbReference>
<dbReference type="GO" id="GO:0005524">
    <property type="term" value="F:ATP binding"/>
    <property type="evidence" value="ECO:0007669"/>
    <property type="project" value="UniProtKB-UniRule"/>
</dbReference>
<dbReference type="GO" id="GO:0042242">
    <property type="term" value="F:cobyrinic acid a,c-diamide synthase activity"/>
    <property type="evidence" value="ECO:0007669"/>
    <property type="project" value="InterPro"/>
</dbReference>
<dbReference type="GO" id="GO:0043802">
    <property type="term" value="F:hydrogenobyrinic acid a,c-diamide synthase (glutamine-hydrolysing) activity"/>
    <property type="evidence" value="ECO:0007669"/>
    <property type="project" value="UniProtKB-UniRule"/>
</dbReference>
<dbReference type="GO" id="GO:0009236">
    <property type="term" value="P:cobalamin biosynthetic process"/>
    <property type="evidence" value="ECO:0007669"/>
    <property type="project" value="UniProtKB-UniRule"/>
</dbReference>
<dbReference type="CDD" id="cd05388">
    <property type="entry name" value="CobB_N"/>
    <property type="match status" value="1"/>
</dbReference>
<dbReference type="CDD" id="cd03130">
    <property type="entry name" value="GATase1_CobB"/>
    <property type="match status" value="1"/>
</dbReference>
<dbReference type="FunFam" id="3.40.50.300:FF:002379">
    <property type="entry name" value="Hydrogenobyrinate a,c-diamide synthase"/>
    <property type="match status" value="1"/>
</dbReference>
<dbReference type="FunFam" id="3.40.50.880:FF:000098">
    <property type="entry name" value="Hydrogenobyrinate a,c-diamide synthase"/>
    <property type="match status" value="1"/>
</dbReference>
<dbReference type="Gene3D" id="3.40.50.880">
    <property type="match status" value="1"/>
</dbReference>
<dbReference type="Gene3D" id="3.40.50.300">
    <property type="entry name" value="P-loop containing nucleotide triphosphate hydrolases"/>
    <property type="match status" value="1"/>
</dbReference>
<dbReference type="HAMAP" id="MF_00027">
    <property type="entry name" value="CobB_CbiA"/>
    <property type="match status" value="1"/>
</dbReference>
<dbReference type="InterPro" id="IPR004484">
    <property type="entry name" value="CbiA/CobB_synth"/>
</dbReference>
<dbReference type="InterPro" id="IPR029062">
    <property type="entry name" value="Class_I_gatase-like"/>
</dbReference>
<dbReference type="InterPro" id="IPR002586">
    <property type="entry name" value="CobQ/CobB/MinD/ParA_Nub-bd_dom"/>
</dbReference>
<dbReference type="InterPro" id="IPR011698">
    <property type="entry name" value="GATase_3"/>
</dbReference>
<dbReference type="InterPro" id="IPR027417">
    <property type="entry name" value="P-loop_NTPase"/>
</dbReference>
<dbReference type="NCBIfam" id="TIGR00379">
    <property type="entry name" value="cobB"/>
    <property type="match status" value="1"/>
</dbReference>
<dbReference type="NCBIfam" id="NF002204">
    <property type="entry name" value="PRK01077.1"/>
    <property type="match status" value="1"/>
</dbReference>
<dbReference type="PANTHER" id="PTHR43873">
    <property type="entry name" value="COBYRINATE A,C-DIAMIDE SYNTHASE"/>
    <property type="match status" value="1"/>
</dbReference>
<dbReference type="PANTHER" id="PTHR43873:SF1">
    <property type="entry name" value="COBYRINATE A,C-DIAMIDE SYNTHASE"/>
    <property type="match status" value="1"/>
</dbReference>
<dbReference type="Pfam" id="PF01656">
    <property type="entry name" value="CbiA"/>
    <property type="match status" value="1"/>
</dbReference>
<dbReference type="Pfam" id="PF07685">
    <property type="entry name" value="GATase_3"/>
    <property type="match status" value="1"/>
</dbReference>
<dbReference type="SUPFAM" id="SSF52317">
    <property type="entry name" value="Class I glutamine amidotransferase-like"/>
    <property type="match status" value="1"/>
</dbReference>
<dbReference type="SUPFAM" id="SSF52540">
    <property type="entry name" value="P-loop containing nucleoside triphosphate hydrolases"/>
    <property type="match status" value="1"/>
</dbReference>
<dbReference type="PROSITE" id="PS51274">
    <property type="entry name" value="GATASE_COBBQ"/>
    <property type="match status" value="1"/>
</dbReference>
<organism>
    <name type="scientific">Mycobacterium bovis (strain ATCC BAA-935 / AF2122/97)</name>
    <dbReference type="NCBI Taxonomy" id="233413"/>
    <lineage>
        <taxon>Bacteria</taxon>
        <taxon>Bacillati</taxon>
        <taxon>Actinomycetota</taxon>
        <taxon>Actinomycetes</taxon>
        <taxon>Mycobacteriales</taxon>
        <taxon>Mycobacteriaceae</taxon>
        <taxon>Mycobacterium</taxon>
        <taxon>Mycobacterium tuberculosis complex</taxon>
    </lineage>
</organism>
<proteinExistence type="inferred from homology"/>
<protein>
    <recommendedName>
        <fullName evidence="1">Hydrogenobyrinate a,c-diamide synthase</fullName>
        <ecNumber evidence="1">6.3.5.9</ecNumber>
    </recommendedName>
    <alternativeName>
        <fullName evidence="1">Hydrogenobyrinic acid a,c-diamide synthase</fullName>
    </alternativeName>
</protein>
<sequence length="457" mass="46958">MRVSAVAVAAPASGSGKTTIATGLIGALRQAGHTVAPFKVGPDFIDPGYHALAAGRPGRNLDPVLVGERLIGPLYAHGVAGADIAVIEGVLGLFDGRIGPAGGAPAAGSTAHVAALLGAPVILVVDARGQSHSVAALLHGFSTFDTATRIAGVILNRVGSARHEQVLRQACDQAGVAVLGAIPRTAELELPTRYLGLVTAVEYGRRARLAVQAMTAVVARHVDLAAVIACAGSQAAHPPWDPVIAVGNTARQPATVAIAAGRAFTFGYAEHAEMLRAAGAEVVEFDPLSETLPEGTDAVVLPGGFPEQFTAELSANDTVRRQINELAAAGAPVHAECAGLLYLVSELDGHPMCGVVAGSARFTQHLKLGYRDAVAVVDSALYSVGERVVGHEFHRTAVTFADSYQPAWVYQGQDVDDVRDGAVHSGVHASYLHTHPAATPGAVARFVAHAACNTPRA</sequence>
<name>COBB_MYCBO</name>
<comment type="function">
    <text evidence="1">Catalyzes the ATP-dependent amidation of the two carboxylate groups at positions a and c of hydrogenobyrinate, using either L-glutamine or ammonia as the nitrogen source.</text>
</comment>
<comment type="catalytic activity">
    <reaction evidence="1">
        <text>hydrogenobyrinate + 2 L-glutamine + 2 ATP + 2 H2O = hydrogenobyrinate a,c-diamide + 2 L-glutamate + 2 ADP + 2 phosphate + 2 H(+)</text>
        <dbReference type="Rhea" id="RHEA:12544"/>
        <dbReference type="ChEBI" id="CHEBI:15377"/>
        <dbReference type="ChEBI" id="CHEBI:15378"/>
        <dbReference type="ChEBI" id="CHEBI:29985"/>
        <dbReference type="ChEBI" id="CHEBI:30616"/>
        <dbReference type="ChEBI" id="CHEBI:43474"/>
        <dbReference type="ChEBI" id="CHEBI:58359"/>
        <dbReference type="ChEBI" id="CHEBI:77873"/>
        <dbReference type="ChEBI" id="CHEBI:77874"/>
        <dbReference type="ChEBI" id="CHEBI:456216"/>
        <dbReference type="EC" id="6.3.5.9"/>
    </reaction>
</comment>
<comment type="cofactor">
    <cofactor evidence="1">
        <name>Mg(2+)</name>
        <dbReference type="ChEBI" id="CHEBI:18420"/>
    </cofactor>
</comment>
<comment type="pathway">
    <text evidence="1">Cofactor biosynthesis; adenosylcobalamin biosynthesis; cob(II)yrinate a,c-diamide from precorrin-2 (aerobic route): step 9/10.</text>
</comment>
<comment type="domain">
    <text evidence="1">Comprises of two domains. The C-terminal domain contains the binding site for glutamine and catalyzes the hydrolysis of this substrate to glutamate and ammonia. The N-terminal domain is anticipated to bind ATP and hydrogenobyrinate and catalyzes the ultimate synthesis of the diamide product. The ammonia produced via the glutaminase domain is probably translocated to the adjacent domain via a molecular tunnel, where it reacts with an activated intermediate.</text>
</comment>
<comment type="miscellaneous">
    <text evidence="1">The a and c carboxylates of hydrogenobyrinate are activated for nucleophilic attack via formation of a phosphorylated intermediate by ATP. CobB catalyzes first the amidation of the c-carboxylate, and then that of the a-carboxylate.</text>
</comment>
<comment type="similarity">
    <text evidence="1">Belongs to the CobB/CbiA family.</text>
</comment>
<feature type="chain" id="PRO_0000141263" description="Hydrogenobyrinate a,c-diamide synthase">
    <location>
        <begin position="1"/>
        <end position="457"/>
    </location>
</feature>
<feature type="domain" description="GATase cobBQ-type" evidence="1">
    <location>
        <begin position="255"/>
        <end position="441"/>
    </location>
</feature>
<feature type="active site" description="Nucleophile" evidence="1">
    <location>
        <position position="337"/>
    </location>
</feature>
<feature type="site" description="Increases nucleophilicity of active site Cys" evidence="1">
    <location>
        <position position="433"/>
    </location>
</feature>
<accession>P63836</accession>
<accession>A0A1R3Y2E3</accession>
<accession>O05811</accession>
<accession>X2BLS0</accession>
<evidence type="ECO:0000255" key="1">
    <source>
        <dbReference type="HAMAP-Rule" id="MF_00027"/>
    </source>
</evidence>
<reference key="1">
    <citation type="journal article" date="2003" name="Proc. Natl. Acad. Sci. U.S.A.">
        <title>The complete genome sequence of Mycobacterium bovis.</title>
        <authorList>
            <person name="Garnier T."/>
            <person name="Eiglmeier K."/>
            <person name="Camus J.-C."/>
            <person name="Medina N."/>
            <person name="Mansoor H."/>
            <person name="Pryor M."/>
            <person name="Duthoy S."/>
            <person name="Grondin S."/>
            <person name="Lacroix C."/>
            <person name="Monsempe C."/>
            <person name="Simon S."/>
            <person name="Harris B."/>
            <person name="Atkin R."/>
            <person name="Doggett J."/>
            <person name="Mayes R."/>
            <person name="Keating L."/>
            <person name="Wheeler P.R."/>
            <person name="Parkhill J."/>
            <person name="Barrell B.G."/>
            <person name="Cole S.T."/>
            <person name="Gordon S.V."/>
            <person name="Hewinson R.G."/>
        </authorList>
    </citation>
    <scope>NUCLEOTIDE SEQUENCE [LARGE SCALE GENOMIC DNA]</scope>
    <source>
        <strain>ATCC BAA-935 / AF2122/97</strain>
    </source>
</reference>
<reference key="2">
    <citation type="journal article" date="2017" name="Genome Announc.">
        <title>Updated reference genome sequence and annotation of Mycobacterium bovis AF2122/97.</title>
        <authorList>
            <person name="Malone K.M."/>
            <person name="Farrell D."/>
            <person name="Stuber T.P."/>
            <person name="Schubert O.T."/>
            <person name="Aebersold R."/>
            <person name="Robbe-Austerman S."/>
            <person name="Gordon S.V."/>
        </authorList>
    </citation>
    <scope>NUCLEOTIDE SEQUENCE [LARGE SCALE GENOMIC DNA]</scope>
    <scope>GENOME REANNOTATION</scope>
    <source>
        <strain>ATCC BAA-935 / AF2122/97</strain>
    </source>
</reference>
<keyword id="KW-0067">ATP-binding</keyword>
<keyword id="KW-0169">Cobalamin biosynthesis</keyword>
<keyword id="KW-0315">Glutamine amidotransferase</keyword>
<keyword id="KW-0436">Ligase</keyword>
<keyword id="KW-0460">Magnesium</keyword>
<keyword id="KW-0547">Nucleotide-binding</keyword>
<keyword id="KW-1185">Reference proteome</keyword>
<gene>
    <name evidence="1" type="primary">cobB</name>
    <name type="ordered locus">BQ2027_MB2873C</name>
</gene>